<organism>
    <name type="scientific">Arabidopsis thaliana</name>
    <name type="common">Mouse-ear cress</name>
    <dbReference type="NCBI Taxonomy" id="3702"/>
    <lineage>
        <taxon>Eukaryota</taxon>
        <taxon>Viridiplantae</taxon>
        <taxon>Streptophyta</taxon>
        <taxon>Embryophyta</taxon>
        <taxon>Tracheophyta</taxon>
        <taxon>Spermatophyta</taxon>
        <taxon>Magnoliopsida</taxon>
        <taxon>eudicotyledons</taxon>
        <taxon>Gunneridae</taxon>
        <taxon>Pentapetalae</taxon>
        <taxon>rosids</taxon>
        <taxon>malvids</taxon>
        <taxon>Brassicales</taxon>
        <taxon>Brassicaceae</taxon>
        <taxon>Camelineae</taxon>
        <taxon>Arabidopsis</taxon>
    </lineage>
</organism>
<dbReference type="EC" id="2.8.2.-"/>
<dbReference type="EMBL" id="AC006836">
    <property type="protein sequence ID" value="AAD20077.2"/>
    <property type="molecule type" value="Genomic_DNA"/>
</dbReference>
<dbReference type="EMBL" id="CP002685">
    <property type="protein sequence ID" value="AEC05745.1"/>
    <property type="molecule type" value="Genomic_DNA"/>
</dbReference>
<dbReference type="EMBL" id="AY092961">
    <property type="protein sequence ID" value="AAM12960.1"/>
    <property type="molecule type" value="mRNA"/>
</dbReference>
<dbReference type="EMBL" id="AF325065">
    <property type="protein sequence ID" value="AAK17133.1"/>
    <property type="molecule type" value="mRNA"/>
</dbReference>
<dbReference type="EMBL" id="BT002108">
    <property type="protein sequence ID" value="AAN72119.1"/>
    <property type="molecule type" value="mRNA"/>
</dbReference>
<dbReference type="EMBL" id="AY087921">
    <property type="protein sequence ID" value="AAM65471.1"/>
    <property type="status" value="ALT_INIT"/>
    <property type="molecule type" value="mRNA"/>
</dbReference>
<dbReference type="PIR" id="H84451">
    <property type="entry name" value="H84451"/>
</dbReference>
<dbReference type="RefSeq" id="NP_565305.1">
    <property type="nucleotide sequence ID" value="NM_126422.3"/>
</dbReference>
<dbReference type="SMR" id="Q8RV79"/>
<dbReference type="FunCoup" id="Q8RV79">
    <property type="interactions" value="153"/>
</dbReference>
<dbReference type="STRING" id="3702.Q8RV79"/>
<dbReference type="iPTMnet" id="Q8RV79"/>
<dbReference type="PaxDb" id="3702-AT2G03750.1"/>
<dbReference type="ProteomicsDB" id="232627"/>
<dbReference type="DNASU" id="814902"/>
<dbReference type="EnsemblPlants" id="AT2G03750.1">
    <property type="protein sequence ID" value="AT2G03750.1"/>
    <property type="gene ID" value="AT2G03750"/>
</dbReference>
<dbReference type="GeneID" id="814902"/>
<dbReference type="Gramene" id="AT2G03750.1">
    <property type="protein sequence ID" value="AT2G03750.1"/>
    <property type="gene ID" value="AT2G03750"/>
</dbReference>
<dbReference type="KEGG" id="ath:AT2G03750"/>
<dbReference type="Araport" id="AT2G03750"/>
<dbReference type="TAIR" id="AT2G03750"/>
<dbReference type="eggNOG" id="KOG1584">
    <property type="taxonomic scope" value="Eukaryota"/>
</dbReference>
<dbReference type="HOGENOM" id="CLU_027239_0_1_1"/>
<dbReference type="InParanoid" id="Q8RV79"/>
<dbReference type="OMA" id="EQANTMP"/>
<dbReference type="PhylomeDB" id="Q8RV79"/>
<dbReference type="BioCyc" id="ARA:AT2G03750-MONOMER"/>
<dbReference type="PRO" id="PR:Q8RV79"/>
<dbReference type="Proteomes" id="UP000006548">
    <property type="component" value="Chromosome 2"/>
</dbReference>
<dbReference type="ExpressionAtlas" id="Q8RV79">
    <property type="expression patterns" value="baseline and differential"/>
</dbReference>
<dbReference type="GO" id="GO:0005737">
    <property type="term" value="C:cytoplasm"/>
    <property type="evidence" value="ECO:0007669"/>
    <property type="project" value="UniProtKB-SubCell"/>
</dbReference>
<dbReference type="GO" id="GO:0008146">
    <property type="term" value="F:sulfotransferase activity"/>
    <property type="evidence" value="ECO:0007669"/>
    <property type="project" value="InterPro"/>
</dbReference>
<dbReference type="Gene3D" id="3.40.50.300">
    <property type="entry name" value="P-loop containing nucleotide triphosphate hydrolases"/>
    <property type="match status" value="1"/>
</dbReference>
<dbReference type="InterPro" id="IPR027417">
    <property type="entry name" value="P-loop_NTPase"/>
</dbReference>
<dbReference type="InterPro" id="IPR000863">
    <property type="entry name" value="Sulfotransferase_dom"/>
</dbReference>
<dbReference type="PANTHER" id="PTHR11783">
    <property type="entry name" value="SULFOTRANSFERASE SULT"/>
    <property type="match status" value="1"/>
</dbReference>
<dbReference type="Pfam" id="PF00685">
    <property type="entry name" value="Sulfotransfer_1"/>
    <property type="match status" value="1"/>
</dbReference>
<dbReference type="SUPFAM" id="SSF52540">
    <property type="entry name" value="P-loop containing nucleoside triphosphate hydrolases"/>
    <property type="match status" value="1"/>
</dbReference>
<protein>
    <recommendedName>
        <fullName>Cytosolic sulfotransferase 11</fullName>
        <shortName>AtSOT11</shortName>
        <ecNumber>2.8.2.-</ecNumber>
    </recommendedName>
</protein>
<keyword id="KW-0963">Cytoplasm</keyword>
<keyword id="KW-1185">Reference proteome</keyword>
<keyword id="KW-0808">Transferase</keyword>
<gene>
    <name type="primary">SOT11</name>
    <name type="ordered locus">At2g03750</name>
    <name type="ORF">F19B11</name>
</gene>
<proteinExistence type="evidence at transcript level"/>
<sequence>MFTFFTILSLCFKSWEQIITMEASKEAHHLPNYMKDDNVSQETKNLITSLPSDKDFMGYGLYNYKGCWYYPNTLQAVLDVQKHFKPRDTDIILASLPKGGTTWLKSLIFAVVHREKYRGTPQTHPLLLQNPHDLVPFLEVELYANSQIPDLAKYSSPMIFSTHMHLQALREATTKACKTVYVCRGIKDTFVSGWHYRNMLHRTKMDQATFELMFDAYCRGVLLYGPYWEHVLSYWKGSLEAKENVLFMKYEEIIEEPRVQVKRLAEFLECPFTKEEEESGSVEEILKLCSLRNLSNLEVNKNGTTRIGVDSQVFFRKGEVGDWKNHLTPQMAKTFDEIIDYRLGDSGLIFQ</sequence>
<comment type="function">
    <text evidence="1">Sulfotransferase that utilizes 3'-phospho-5'-adenylyl sulfate (PAPS) as sulfonate donor.</text>
</comment>
<comment type="subcellular location">
    <subcellularLocation>
        <location evidence="1">Cytoplasm</location>
    </subcellularLocation>
</comment>
<comment type="disruption phenotype">
    <text evidence="2">No effect on sensitivity to salicylic acid.</text>
</comment>
<comment type="similarity">
    <text evidence="3">Belongs to the sulfotransferase 1 family.</text>
</comment>
<comment type="sequence caution" evidence="3">
    <conflict type="erroneous initiation">
        <sequence resource="EMBL-CDS" id="AAM65471"/>
    </conflict>
    <text>Truncated N-terminus.</text>
</comment>
<reference key="1">
    <citation type="journal article" date="1999" name="Nature">
        <title>Sequence and analysis of chromosome 2 of the plant Arabidopsis thaliana.</title>
        <authorList>
            <person name="Lin X."/>
            <person name="Kaul S."/>
            <person name="Rounsley S.D."/>
            <person name="Shea T.P."/>
            <person name="Benito M.-I."/>
            <person name="Town C.D."/>
            <person name="Fujii C.Y."/>
            <person name="Mason T.M."/>
            <person name="Bowman C.L."/>
            <person name="Barnstead M.E."/>
            <person name="Feldblyum T.V."/>
            <person name="Buell C.R."/>
            <person name="Ketchum K.A."/>
            <person name="Lee J.J."/>
            <person name="Ronning C.M."/>
            <person name="Koo H.L."/>
            <person name="Moffat K.S."/>
            <person name="Cronin L.A."/>
            <person name="Shen M."/>
            <person name="Pai G."/>
            <person name="Van Aken S."/>
            <person name="Umayam L."/>
            <person name="Tallon L.J."/>
            <person name="Gill J.E."/>
            <person name="Adams M.D."/>
            <person name="Carrera A.J."/>
            <person name="Creasy T.H."/>
            <person name="Goodman H.M."/>
            <person name="Somerville C.R."/>
            <person name="Copenhaver G.P."/>
            <person name="Preuss D."/>
            <person name="Nierman W.C."/>
            <person name="White O."/>
            <person name="Eisen J.A."/>
            <person name="Salzberg S.L."/>
            <person name="Fraser C.M."/>
            <person name="Venter J.C."/>
        </authorList>
    </citation>
    <scope>NUCLEOTIDE SEQUENCE [LARGE SCALE GENOMIC DNA]</scope>
    <source>
        <strain>cv. Columbia</strain>
    </source>
</reference>
<reference key="2">
    <citation type="journal article" date="2017" name="Plant J.">
        <title>Araport11: a complete reannotation of the Arabidopsis thaliana reference genome.</title>
        <authorList>
            <person name="Cheng C.Y."/>
            <person name="Krishnakumar V."/>
            <person name="Chan A.P."/>
            <person name="Thibaud-Nissen F."/>
            <person name="Schobel S."/>
            <person name="Town C.D."/>
        </authorList>
    </citation>
    <scope>GENOME REANNOTATION</scope>
    <source>
        <strain>cv. Columbia</strain>
    </source>
</reference>
<reference key="3">
    <citation type="journal article" date="2003" name="Science">
        <title>Empirical analysis of transcriptional activity in the Arabidopsis genome.</title>
        <authorList>
            <person name="Yamada K."/>
            <person name="Lim J."/>
            <person name="Dale J.M."/>
            <person name="Chen H."/>
            <person name="Shinn P."/>
            <person name="Palm C.J."/>
            <person name="Southwick A.M."/>
            <person name="Wu H.C."/>
            <person name="Kim C.J."/>
            <person name="Nguyen M."/>
            <person name="Pham P.K."/>
            <person name="Cheuk R.F."/>
            <person name="Karlin-Newmann G."/>
            <person name="Liu S.X."/>
            <person name="Lam B."/>
            <person name="Sakano H."/>
            <person name="Wu T."/>
            <person name="Yu G."/>
            <person name="Miranda M."/>
            <person name="Quach H.L."/>
            <person name="Tripp M."/>
            <person name="Chang C.H."/>
            <person name="Lee J.M."/>
            <person name="Toriumi M.J."/>
            <person name="Chan M.M."/>
            <person name="Tang C.C."/>
            <person name="Onodera C.S."/>
            <person name="Deng J.M."/>
            <person name="Akiyama K."/>
            <person name="Ansari Y."/>
            <person name="Arakawa T."/>
            <person name="Banh J."/>
            <person name="Banno F."/>
            <person name="Bowser L."/>
            <person name="Brooks S.Y."/>
            <person name="Carninci P."/>
            <person name="Chao Q."/>
            <person name="Choy N."/>
            <person name="Enju A."/>
            <person name="Goldsmith A.D."/>
            <person name="Gurjal M."/>
            <person name="Hansen N.F."/>
            <person name="Hayashizaki Y."/>
            <person name="Johnson-Hopson C."/>
            <person name="Hsuan V.W."/>
            <person name="Iida K."/>
            <person name="Karnes M."/>
            <person name="Khan S."/>
            <person name="Koesema E."/>
            <person name="Ishida J."/>
            <person name="Jiang P.X."/>
            <person name="Jones T."/>
            <person name="Kawai J."/>
            <person name="Kamiya A."/>
            <person name="Meyers C."/>
            <person name="Nakajima M."/>
            <person name="Narusaka M."/>
            <person name="Seki M."/>
            <person name="Sakurai T."/>
            <person name="Satou M."/>
            <person name="Tamse R."/>
            <person name="Vaysberg M."/>
            <person name="Wallender E.K."/>
            <person name="Wong C."/>
            <person name="Yamamura Y."/>
            <person name="Yuan S."/>
            <person name="Shinozaki K."/>
            <person name="Davis R.W."/>
            <person name="Theologis A."/>
            <person name="Ecker J.R."/>
        </authorList>
    </citation>
    <scope>NUCLEOTIDE SEQUENCE [LARGE SCALE MRNA]</scope>
    <source>
        <strain>cv. Columbia</strain>
    </source>
</reference>
<reference key="4">
    <citation type="submission" date="2002-03" db="EMBL/GenBank/DDBJ databases">
        <title>Full-length cDNA from Arabidopsis thaliana.</title>
        <authorList>
            <person name="Brover V.V."/>
            <person name="Troukhan M.E."/>
            <person name="Alexandrov N.A."/>
            <person name="Lu Y.-P."/>
            <person name="Flavell R.B."/>
            <person name="Feldmann K.A."/>
        </authorList>
    </citation>
    <scope>NUCLEOTIDE SEQUENCE [LARGE SCALE MRNA]</scope>
</reference>
<reference key="5">
    <citation type="journal article" date="2004" name="J. Exp. Bot.">
        <title>The multi-protein family of Arabidopsis sulphotransferases and their relatives in other plant species.</title>
        <authorList>
            <person name="Klein M."/>
            <person name="Papenbrock J."/>
        </authorList>
    </citation>
    <scope>GENE FAMILY</scope>
    <scope>NOMENCLATURE</scope>
</reference>
<reference key="6">
    <citation type="journal article" date="2010" name="Plant Cell Environ.">
        <title>A stress-inducible sulphotransferase sulphonates salicylic acid and confers pathogen resistance in Arabidopsis.</title>
        <authorList>
            <person name="Baek D."/>
            <person name="Pathange P."/>
            <person name="Chung J.S."/>
            <person name="Jiang J."/>
            <person name="Gao L."/>
            <person name="Oikawa A."/>
            <person name="Hirai M.Y."/>
            <person name="Saito K."/>
            <person name="Pare P.W."/>
            <person name="Shi H."/>
        </authorList>
    </citation>
    <scope>DISRUPTION PHENOTYPE</scope>
</reference>
<name>SOT11_ARATH</name>
<accession>Q8RV79</accession>
<accession>Q9ZPQ6</accession>
<feature type="chain" id="PRO_0000417059" description="Cytosolic sulfotransferase 11">
    <location>
        <begin position="1"/>
        <end position="351"/>
    </location>
</feature>
<feature type="active site" description="Proton acceptor" evidence="1">
    <location>
        <position position="163"/>
    </location>
</feature>
<feature type="binding site" evidence="1">
    <location>
        <begin position="98"/>
        <end position="103"/>
    </location>
    <ligand>
        <name>3'-phosphoadenylyl sulfate</name>
        <dbReference type="ChEBI" id="CHEBI:58339"/>
    </ligand>
</feature>
<feature type="binding site" evidence="1">
    <location>
        <position position="184"/>
    </location>
    <ligand>
        <name>3'-phosphoadenylyl sulfate</name>
        <dbReference type="ChEBI" id="CHEBI:58339"/>
    </ligand>
</feature>
<feature type="binding site" evidence="1">
    <location>
        <position position="192"/>
    </location>
    <ligand>
        <name>3'-phosphoadenylyl sulfate</name>
        <dbReference type="ChEBI" id="CHEBI:58339"/>
    </ligand>
</feature>
<feature type="binding site" evidence="1">
    <location>
        <position position="250"/>
    </location>
    <ligand>
        <name>3'-phosphoadenylyl sulfate</name>
        <dbReference type="ChEBI" id="CHEBI:58339"/>
    </ligand>
</feature>
<feature type="binding site" evidence="1">
    <location>
        <begin position="316"/>
        <end position="318"/>
    </location>
    <ligand>
        <name>3'-phosphoadenylyl sulfate</name>
        <dbReference type="ChEBI" id="CHEBI:58339"/>
    </ligand>
</feature>
<evidence type="ECO:0000250" key="1"/>
<evidence type="ECO:0000269" key="2">
    <source>
    </source>
</evidence>
<evidence type="ECO:0000305" key="3"/>